<organism>
    <name type="scientific">Staphylococcus haemolyticus (strain JCSC1435)</name>
    <dbReference type="NCBI Taxonomy" id="279808"/>
    <lineage>
        <taxon>Bacteria</taxon>
        <taxon>Bacillati</taxon>
        <taxon>Bacillota</taxon>
        <taxon>Bacilli</taxon>
        <taxon>Bacillales</taxon>
        <taxon>Staphylococcaceae</taxon>
        <taxon>Staphylococcus</taxon>
    </lineage>
</organism>
<protein>
    <recommendedName>
        <fullName evidence="1">ATP synthase subunit delta</fullName>
    </recommendedName>
    <alternativeName>
        <fullName evidence="1">ATP synthase F(1) sector subunit delta</fullName>
    </alternativeName>
    <alternativeName>
        <fullName evidence="1">F-type ATPase subunit delta</fullName>
        <shortName evidence="1">F-ATPase subunit delta</shortName>
    </alternativeName>
</protein>
<name>ATPD_STAHJ</name>
<gene>
    <name evidence="1" type="primary">atpH</name>
    <name type="ordered locus">SH0929</name>
</gene>
<sequence length="179" mass="20591">MANVANKYAKALFDVAIDKDRLDLMYDELSEVSEATKNYGEDLRAIDSNPNQPASERRKFVGIVFGDANYYLKNMLMILANNRHLVLINSIFKEFKSLYNEYHNEDSAIVESVYQLSDEELDRIKDLILKQTNLSQVHITTKINPELIGGFRVKVGTTVLDGSVKKDLEQIERKFRRVN</sequence>
<feature type="chain" id="PRO_0000371150" description="ATP synthase subunit delta">
    <location>
        <begin position="1"/>
        <end position="179"/>
    </location>
</feature>
<dbReference type="EMBL" id="AP006716">
    <property type="protein sequence ID" value="BAE04238.1"/>
    <property type="molecule type" value="Genomic_DNA"/>
</dbReference>
<dbReference type="RefSeq" id="WP_011275240.1">
    <property type="nucleotide sequence ID" value="NC_007168.1"/>
</dbReference>
<dbReference type="SMR" id="Q4L7Y7"/>
<dbReference type="KEGG" id="sha:SH0929"/>
<dbReference type="eggNOG" id="COG0712">
    <property type="taxonomic scope" value="Bacteria"/>
</dbReference>
<dbReference type="HOGENOM" id="CLU_085114_4_1_9"/>
<dbReference type="OrthoDB" id="9802471at2"/>
<dbReference type="Proteomes" id="UP000000543">
    <property type="component" value="Chromosome"/>
</dbReference>
<dbReference type="GO" id="GO:0005886">
    <property type="term" value="C:plasma membrane"/>
    <property type="evidence" value="ECO:0007669"/>
    <property type="project" value="UniProtKB-SubCell"/>
</dbReference>
<dbReference type="GO" id="GO:0045259">
    <property type="term" value="C:proton-transporting ATP synthase complex"/>
    <property type="evidence" value="ECO:0007669"/>
    <property type="project" value="UniProtKB-KW"/>
</dbReference>
<dbReference type="GO" id="GO:0046933">
    <property type="term" value="F:proton-transporting ATP synthase activity, rotational mechanism"/>
    <property type="evidence" value="ECO:0007669"/>
    <property type="project" value="UniProtKB-UniRule"/>
</dbReference>
<dbReference type="Gene3D" id="1.10.520.20">
    <property type="entry name" value="N-terminal domain of the delta subunit of the F1F0-ATP synthase"/>
    <property type="match status" value="1"/>
</dbReference>
<dbReference type="HAMAP" id="MF_01416">
    <property type="entry name" value="ATP_synth_delta_bact"/>
    <property type="match status" value="1"/>
</dbReference>
<dbReference type="InterPro" id="IPR026015">
    <property type="entry name" value="ATP_synth_OSCP/delta_N_sf"/>
</dbReference>
<dbReference type="InterPro" id="IPR020781">
    <property type="entry name" value="ATPase_OSCP/d_CS"/>
</dbReference>
<dbReference type="InterPro" id="IPR000711">
    <property type="entry name" value="ATPase_OSCP/dsu"/>
</dbReference>
<dbReference type="NCBIfam" id="TIGR01145">
    <property type="entry name" value="ATP_synt_delta"/>
    <property type="match status" value="1"/>
</dbReference>
<dbReference type="NCBIfam" id="NF004399">
    <property type="entry name" value="PRK05758.1-1"/>
    <property type="match status" value="1"/>
</dbReference>
<dbReference type="PANTHER" id="PTHR11910">
    <property type="entry name" value="ATP SYNTHASE DELTA CHAIN"/>
    <property type="match status" value="1"/>
</dbReference>
<dbReference type="Pfam" id="PF00213">
    <property type="entry name" value="OSCP"/>
    <property type="match status" value="1"/>
</dbReference>
<dbReference type="PRINTS" id="PR00125">
    <property type="entry name" value="ATPASEDELTA"/>
</dbReference>
<dbReference type="SUPFAM" id="SSF47928">
    <property type="entry name" value="N-terminal domain of the delta subunit of the F1F0-ATP synthase"/>
    <property type="match status" value="1"/>
</dbReference>
<dbReference type="PROSITE" id="PS00389">
    <property type="entry name" value="ATPASE_DELTA"/>
    <property type="match status" value="1"/>
</dbReference>
<comment type="function">
    <text evidence="1">F(1)F(0) ATP synthase produces ATP from ADP in the presence of a proton or sodium gradient. F-type ATPases consist of two structural domains, F(1) containing the extramembraneous catalytic core and F(0) containing the membrane proton channel, linked together by a central stalk and a peripheral stalk. During catalysis, ATP synthesis in the catalytic domain of F(1) is coupled via a rotary mechanism of the central stalk subunits to proton translocation.</text>
</comment>
<comment type="function">
    <text evidence="1">This protein is part of the stalk that links CF(0) to CF(1). It either transmits conformational changes from CF(0) to CF(1) or is implicated in proton conduction.</text>
</comment>
<comment type="subunit">
    <text evidence="1">F-type ATPases have 2 components, F(1) - the catalytic core - and F(0) - the membrane proton channel. F(1) has five subunits: alpha(3), beta(3), gamma(1), delta(1), epsilon(1). F(0) has three main subunits: a(1), b(2) and c(10-14). The alpha and beta chains form an alternating ring which encloses part of the gamma chain. F(1) is attached to F(0) by a central stalk formed by the gamma and epsilon chains, while a peripheral stalk is formed by the delta and b chains.</text>
</comment>
<comment type="subcellular location">
    <subcellularLocation>
        <location evidence="1">Cell membrane</location>
        <topology evidence="1">Peripheral membrane protein</topology>
    </subcellularLocation>
</comment>
<comment type="similarity">
    <text evidence="1">Belongs to the ATPase delta chain family.</text>
</comment>
<proteinExistence type="inferred from homology"/>
<evidence type="ECO:0000255" key="1">
    <source>
        <dbReference type="HAMAP-Rule" id="MF_01416"/>
    </source>
</evidence>
<keyword id="KW-0066">ATP synthesis</keyword>
<keyword id="KW-1003">Cell membrane</keyword>
<keyword id="KW-0139">CF(1)</keyword>
<keyword id="KW-0375">Hydrogen ion transport</keyword>
<keyword id="KW-0406">Ion transport</keyword>
<keyword id="KW-0472">Membrane</keyword>
<keyword id="KW-0813">Transport</keyword>
<reference key="1">
    <citation type="journal article" date="2005" name="J. Bacteriol.">
        <title>Whole-genome sequencing of Staphylococcus haemolyticus uncovers the extreme plasticity of its genome and the evolution of human-colonizing staphylococcal species.</title>
        <authorList>
            <person name="Takeuchi F."/>
            <person name="Watanabe S."/>
            <person name="Baba T."/>
            <person name="Yuzawa H."/>
            <person name="Ito T."/>
            <person name="Morimoto Y."/>
            <person name="Kuroda M."/>
            <person name="Cui L."/>
            <person name="Takahashi M."/>
            <person name="Ankai A."/>
            <person name="Baba S."/>
            <person name="Fukui S."/>
            <person name="Lee J.C."/>
            <person name="Hiramatsu K."/>
        </authorList>
    </citation>
    <scope>NUCLEOTIDE SEQUENCE [LARGE SCALE GENOMIC DNA]</scope>
    <source>
        <strain>JCSC1435</strain>
    </source>
</reference>
<accession>Q4L7Y7</accession>